<proteinExistence type="inferred from homology"/>
<reference key="1">
    <citation type="journal article" date="1999" name="Nat. Genet.">
        <title>Comparative genomes of Chlamydia pneumoniae and C. trachomatis.</title>
        <authorList>
            <person name="Kalman S."/>
            <person name="Mitchell W.P."/>
            <person name="Marathe R."/>
            <person name="Lammel C.J."/>
            <person name="Fan J."/>
            <person name="Hyman R.W."/>
            <person name="Olinger L."/>
            <person name="Grimwood J."/>
            <person name="Davis R.W."/>
            <person name="Stephens R.S."/>
        </authorList>
    </citation>
    <scope>NUCLEOTIDE SEQUENCE [LARGE SCALE GENOMIC DNA]</scope>
    <source>
        <strain>CWL029</strain>
    </source>
</reference>
<reference key="2">
    <citation type="journal article" date="2000" name="Nucleic Acids Res.">
        <title>Genome sequences of Chlamydia trachomatis MoPn and Chlamydia pneumoniae AR39.</title>
        <authorList>
            <person name="Read T.D."/>
            <person name="Brunham R.C."/>
            <person name="Shen C."/>
            <person name="Gill S.R."/>
            <person name="Heidelberg J.F."/>
            <person name="White O."/>
            <person name="Hickey E.K."/>
            <person name="Peterson J.D."/>
            <person name="Utterback T.R."/>
            <person name="Berry K.J."/>
            <person name="Bass S."/>
            <person name="Linher K.D."/>
            <person name="Weidman J.F."/>
            <person name="Khouri H.M."/>
            <person name="Craven B."/>
            <person name="Bowman C."/>
            <person name="Dodson R.J."/>
            <person name="Gwinn M.L."/>
            <person name="Nelson W.C."/>
            <person name="DeBoy R.T."/>
            <person name="Kolonay J.F."/>
            <person name="McClarty G."/>
            <person name="Salzberg S.L."/>
            <person name="Eisen J.A."/>
            <person name="Fraser C.M."/>
        </authorList>
    </citation>
    <scope>NUCLEOTIDE SEQUENCE [LARGE SCALE GENOMIC DNA]</scope>
    <source>
        <strain>AR39</strain>
    </source>
</reference>
<reference key="3">
    <citation type="journal article" date="2000" name="Nucleic Acids Res.">
        <title>Comparison of whole genome sequences of Chlamydia pneumoniae J138 from Japan and CWL029 from USA.</title>
        <authorList>
            <person name="Shirai M."/>
            <person name="Hirakawa H."/>
            <person name="Kimoto M."/>
            <person name="Tabuchi M."/>
            <person name="Kishi F."/>
            <person name="Ouchi K."/>
            <person name="Shiba T."/>
            <person name="Ishii K."/>
            <person name="Hattori M."/>
            <person name="Kuhara S."/>
            <person name="Nakazawa T."/>
        </authorList>
    </citation>
    <scope>NUCLEOTIDE SEQUENCE [LARGE SCALE GENOMIC DNA]</scope>
    <source>
        <strain>J138</strain>
    </source>
</reference>
<reference key="4">
    <citation type="submission" date="2002-05" db="EMBL/GenBank/DDBJ databases">
        <title>The genome sequence of Chlamydia pneumoniae TW183 and comparison with other Chlamydia strains based on whole genome sequence analysis.</title>
        <authorList>
            <person name="Geng M.M."/>
            <person name="Schuhmacher A."/>
            <person name="Muehldorfer I."/>
            <person name="Bensch K.W."/>
            <person name="Schaefer K.P."/>
            <person name="Schneider S."/>
            <person name="Pohl T."/>
            <person name="Essig A."/>
            <person name="Marre R."/>
            <person name="Melchers K."/>
        </authorList>
    </citation>
    <scope>NUCLEOTIDE SEQUENCE [LARGE SCALE GENOMIC DNA]</scope>
    <source>
        <strain>TW-183</strain>
    </source>
</reference>
<feature type="chain" id="PRO_0000177008" description="Transcription elongation factor GreA">
    <location>
        <begin position="1"/>
        <end position="722"/>
    </location>
</feature>
<feature type="domain" description="GRAD1">
    <location>
        <begin position="1"/>
        <end position="504"/>
    </location>
</feature>
<feature type="region of interest" description="GREA">
    <location>
        <begin position="565"/>
        <end position="722"/>
    </location>
</feature>
<feature type="coiled-coil region" evidence="2">
    <location>
        <begin position="606"/>
        <end position="643"/>
    </location>
</feature>
<sequence length="722" mass="82642">MDYLEKLQVLIEEGQSANFLSLWEEYCFNDVVRGRELVEILEKVKSSSLASLFGKIVDTVVPLWEKIPEGKDKDRVLQLILDLQTSNSQMFFDIATEYVNKKYSGEENFNEALRVVGLRDGRDFQFSLSRFDFLMHMHKGNFVFHQGGWGVGEVMGVSFLQQKVLIEFEGIMSAKDISFETAFKSLTPLSGDHFLSRRFGDPDGFEAFAKENPIEVVEILLRDLGPKTAKEIKDELVDLVIPEADWNRWWQSAKTKIKKGTRIISPDNPKEPYVLSDAGCSHMGQLERKLGLSLNSAEKISLIYHFIRDLHSELKNIEIRKSLVKALQDLDVEEGNKSLILQRELLLSEYLGIKDASIDKEYITSLSEDDTSRLLENMPIVALQKSFLSLVRKYSSFWQQVFMQILLYTTSPTMRDFVYKTIKNDPSSVEVLKKRLLDSAHQPMMFPELFVWFFLKLGNHEDGLFDPEDKEVLRLFLESALNFMYQVASTPHKELGKKLHHYLVGQRYLAVRQMIEGASLPFLKELLLLSTKCPQFSSSDLNVLQSLAEVVQPTLKKHKSNVEEENVLWSTSESFSRMKAKLQSLVGKEMVDNAKEIEDARSLGDLRENSEYKFALEKRARLQEEIRVLSEEINRARILTKDLVFTDKVGVGCKVTLKGDAGEVVEYTILGPWDADPDSCILSLQSKLAQNMLGKKLNDVVILQGKEYKISRIQSIWEEHGA</sequence>
<gene>
    <name type="primary">greA</name>
    <name type="ordered locus">CPn_0741</name>
    <name type="ordered locus">CP_0004</name>
    <name type="ordered locus">CpB0769</name>
</gene>
<organism>
    <name type="scientific">Chlamydia pneumoniae</name>
    <name type="common">Chlamydophila pneumoniae</name>
    <dbReference type="NCBI Taxonomy" id="83558"/>
    <lineage>
        <taxon>Bacteria</taxon>
        <taxon>Pseudomonadati</taxon>
        <taxon>Chlamydiota</taxon>
        <taxon>Chlamydiia</taxon>
        <taxon>Chlamydiales</taxon>
        <taxon>Chlamydiaceae</taxon>
        <taxon>Chlamydia/Chlamydophila group</taxon>
        <taxon>Chlamydia</taxon>
    </lineage>
</organism>
<evidence type="ECO:0000250" key="1"/>
<evidence type="ECO:0000255" key="2"/>
<evidence type="ECO:0000305" key="3"/>
<protein>
    <recommendedName>
        <fullName>Transcription elongation factor GreA</fullName>
    </recommendedName>
    <alternativeName>
        <fullName>Transcript cleavage factor GreA</fullName>
    </alternativeName>
</protein>
<accession>Q9Z7G4</accession>
<accession>Q9JQE9</accession>
<name>GREA_CHLPN</name>
<comment type="function">
    <text evidence="1">Necessary for efficient RNA polymerase transcription elongation past template-encoded arresting sites. The arresting sites in DNA have the property of trapping a certain fraction of elongating RNA polymerases that pass through, resulting in locked ternary complexes. Cleavage of the nascent transcript by cleavage factors such as GreA or GreB allows the resumption of elongation from the new 3'terminus. GreA releases sequences of 2 to 3 nucleotides (By similarity).</text>
</comment>
<comment type="similarity">
    <text evidence="3">Belongs to the GreA/GreB family.</text>
</comment>
<dbReference type="EMBL" id="AE001363">
    <property type="protein sequence ID" value="AAD18880.1"/>
    <property type="molecule type" value="Genomic_DNA"/>
</dbReference>
<dbReference type="EMBL" id="AE002161">
    <property type="protein sequence ID" value="AAF37901.1"/>
    <property type="molecule type" value="Genomic_DNA"/>
</dbReference>
<dbReference type="EMBL" id="BA000008">
    <property type="protein sequence ID" value="BAA98948.1"/>
    <property type="molecule type" value="Genomic_DNA"/>
</dbReference>
<dbReference type="EMBL" id="AE009440">
    <property type="protein sequence ID" value="AAP98698.1"/>
    <property type="molecule type" value="Genomic_DNA"/>
</dbReference>
<dbReference type="PIR" id="B86583">
    <property type="entry name" value="B86583"/>
</dbReference>
<dbReference type="PIR" id="C72040">
    <property type="entry name" value="C72040"/>
</dbReference>
<dbReference type="RefSeq" id="NP_224937.1">
    <property type="nucleotide sequence ID" value="NC_000922.1"/>
</dbReference>
<dbReference type="RefSeq" id="WP_010883379.1">
    <property type="nucleotide sequence ID" value="NZ_LN847257.1"/>
</dbReference>
<dbReference type="SMR" id="Q9Z7G4"/>
<dbReference type="STRING" id="406984.CPK_ORF00147"/>
<dbReference type="GeneID" id="45051139"/>
<dbReference type="KEGG" id="cpa:CP_0004"/>
<dbReference type="KEGG" id="cpj:greA"/>
<dbReference type="KEGG" id="cpn:CPn_0741"/>
<dbReference type="KEGG" id="cpt:CpB0769"/>
<dbReference type="PATRIC" id="fig|115713.3.peg.817"/>
<dbReference type="eggNOG" id="COG0782">
    <property type="taxonomic scope" value="Bacteria"/>
</dbReference>
<dbReference type="eggNOG" id="COG1747">
    <property type="taxonomic scope" value="Bacteria"/>
</dbReference>
<dbReference type="HOGENOM" id="CLU_026840_1_0_0"/>
<dbReference type="OrthoDB" id="9808774at2"/>
<dbReference type="Proteomes" id="UP000000583">
    <property type="component" value="Chromosome"/>
</dbReference>
<dbReference type="Proteomes" id="UP000000801">
    <property type="component" value="Chromosome"/>
</dbReference>
<dbReference type="GO" id="GO:0003677">
    <property type="term" value="F:DNA binding"/>
    <property type="evidence" value="ECO:0007669"/>
    <property type="project" value="UniProtKB-UniRule"/>
</dbReference>
<dbReference type="GO" id="GO:0070063">
    <property type="term" value="F:RNA polymerase binding"/>
    <property type="evidence" value="ECO:0007669"/>
    <property type="project" value="InterPro"/>
</dbReference>
<dbReference type="GO" id="GO:0006354">
    <property type="term" value="P:DNA-templated transcription elongation"/>
    <property type="evidence" value="ECO:0007669"/>
    <property type="project" value="TreeGrafter"/>
</dbReference>
<dbReference type="GO" id="GO:0032784">
    <property type="term" value="P:regulation of DNA-templated transcription elongation"/>
    <property type="evidence" value="ECO:0007669"/>
    <property type="project" value="UniProtKB-UniRule"/>
</dbReference>
<dbReference type="FunFam" id="1.10.287.180:FF:000001">
    <property type="entry name" value="Transcription elongation factor GreA"/>
    <property type="match status" value="1"/>
</dbReference>
<dbReference type="Gene3D" id="3.10.50.30">
    <property type="entry name" value="Transcription elongation factor, GreA/GreB, C-terminal domain"/>
    <property type="match status" value="1"/>
</dbReference>
<dbReference type="Gene3D" id="1.10.287.180">
    <property type="entry name" value="Transcription elongation factor, GreA/GreB, N-terminal domain"/>
    <property type="match status" value="1"/>
</dbReference>
<dbReference type="HAMAP" id="MF_00105">
    <property type="entry name" value="GreA_GreB"/>
    <property type="match status" value="1"/>
</dbReference>
<dbReference type="InterPro" id="IPR036953">
    <property type="entry name" value="GreA/GreB_C_sf"/>
</dbReference>
<dbReference type="InterPro" id="IPR018151">
    <property type="entry name" value="TF_GreA/GreB_CS"/>
</dbReference>
<dbReference type="InterPro" id="IPR006359">
    <property type="entry name" value="Tscrpt_elong_fac_GreA"/>
</dbReference>
<dbReference type="InterPro" id="IPR028624">
    <property type="entry name" value="Tscrpt_elong_fac_GreA/B"/>
</dbReference>
<dbReference type="InterPro" id="IPR001437">
    <property type="entry name" value="Tscrpt_elong_fac_GreA/B_C"/>
</dbReference>
<dbReference type="InterPro" id="IPR023459">
    <property type="entry name" value="Tscrpt_elong_fac_GreA/B_fam"/>
</dbReference>
<dbReference type="InterPro" id="IPR022691">
    <property type="entry name" value="Tscrpt_elong_fac_GreA/B_N"/>
</dbReference>
<dbReference type="InterPro" id="IPR036805">
    <property type="entry name" value="Tscrpt_elong_fac_GreA/B_N_sf"/>
</dbReference>
<dbReference type="NCBIfam" id="TIGR01462">
    <property type="entry name" value="greA"/>
    <property type="match status" value="1"/>
</dbReference>
<dbReference type="NCBIfam" id="NF004969">
    <property type="entry name" value="PRK06330.1"/>
    <property type="match status" value="1"/>
</dbReference>
<dbReference type="PANTHER" id="PTHR30437">
    <property type="entry name" value="TRANSCRIPTION ELONGATION FACTOR GREA"/>
    <property type="match status" value="1"/>
</dbReference>
<dbReference type="PANTHER" id="PTHR30437:SF4">
    <property type="entry name" value="TRANSCRIPTION ELONGATION FACTOR GREA"/>
    <property type="match status" value="1"/>
</dbReference>
<dbReference type="Pfam" id="PF01272">
    <property type="entry name" value="GreA_GreB"/>
    <property type="match status" value="1"/>
</dbReference>
<dbReference type="Pfam" id="PF03449">
    <property type="entry name" value="GreA_GreB_N"/>
    <property type="match status" value="1"/>
</dbReference>
<dbReference type="SUPFAM" id="SSF54534">
    <property type="entry name" value="FKBP-like"/>
    <property type="match status" value="1"/>
</dbReference>
<dbReference type="SUPFAM" id="SSF46557">
    <property type="entry name" value="GreA transcript cleavage protein, N-terminal domain"/>
    <property type="match status" value="1"/>
</dbReference>
<dbReference type="PROSITE" id="PS00829">
    <property type="entry name" value="GREAB_1"/>
    <property type="match status" value="1"/>
</dbReference>
<dbReference type="PROSITE" id="PS00830">
    <property type="entry name" value="GREAB_2"/>
    <property type="match status" value="1"/>
</dbReference>
<keyword id="KW-0175">Coiled coil</keyword>
<keyword id="KW-0238">DNA-binding</keyword>
<keyword id="KW-0804">Transcription</keyword>
<keyword id="KW-0805">Transcription regulation</keyword>